<evidence type="ECO:0000255" key="1">
    <source>
        <dbReference type="HAMAP-Rule" id="MF_00227"/>
    </source>
</evidence>
<comment type="function">
    <text evidence="1">RNaseP catalyzes the removal of the 5'-leader sequence from pre-tRNA to produce the mature 5'-terminus. It can also cleave other RNA substrates such as 4.5S RNA. The protein component plays an auxiliary but essential role in vivo by binding to the 5'-leader sequence and broadening the substrate specificity of the ribozyme.</text>
</comment>
<comment type="catalytic activity">
    <reaction evidence="1">
        <text>Endonucleolytic cleavage of RNA, removing 5'-extranucleotides from tRNA precursor.</text>
        <dbReference type="EC" id="3.1.26.5"/>
    </reaction>
</comment>
<comment type="subunit">
    <text evidence="1">Consists of a catalytic RNA component (M1 or rnpB) and a protein subunit.</text>
</comment>
<comment type="similarity">
    <text evidence="1">Belongs to the RnpA family.</text>
</comment>
<reference key="1">
    <citation type="journal article" date="2008" name="BMC Genomics">
        <title>The genome sequence of the fish pathogen Aliivibrio salmonicida strain LFI1238 shows extensive evidence of gene decay.</title>
        <authorList>
            <person name="Hjerde E."/>
            <person name="Lorentzen M.S."/>
            <person name="Holden M.T."/>
            <person name="Seeger K."/>
            <person name="Paulsen S."/>
            <person name="Bason N."/>
            <person name="Churcher C."/>
            <person name="Harris D."/>
            <person name="Norbertczak H."/>
            <person name="Quail M.A."/>
            <person name="Sanders S."/>
            <person name="Thurston S."/>
            <person name="Parkhill J."/>
            <person name="Willassen N.P."/>
            <person name="Thomson N.R."/>
        </authorList>
    </citation>
    <scope>NUCLEOTIDE SEQUENCE [LARGE SCALE GENOMIC DNA]</scope>
    <source>
        <strain>LFI1238</strain>
    </source>
</reference>
<protein>
    <recommendedName>
        <fullName evidence="1">Ribonuclease P protein component</fullName>
        <shortName evidence="1">RNase P protein</shortName>
        <shortName evidence="1">RNaseP protein</shortName>
        <ecNumber evidence="1">3.1.26.5</ecNumber>
    </recommendedName>
    <alternativeName>
        <fullName evidence="1">Protein C5</fullName>
    </alternativeName>
</protein>
<dbReference type="EC" id="3.1.26.5" evidence="1"/>
<dbReference type="EMBL" id="FM178379">
    <property type="protein sequence ID" value="CAQ77689.1"/>
    <property type="molecule type" value="Genomic_DNA"/>
</dbReference>
<dbReference type="RefSeq" id="WP_012548914.1">
    <property type="nucleotide sequence ID" value="NC_011312.1"/>
</dbReference>
<dbReference type="SMR" id="B6EP41"/>
<dbReference type="KEGG" id="vsa:VSAL_I0004"/>
<dbReference type="eggNOG" id="COG0594">
    <property type="taxonomic scope" value="Bacteria"/>
</dbReference>
<dbReference type="HOGENOM" id="CLU_117179_11_0_6"/>
<dbReference type="Proteomes" id="UP000001730">
    <property type="component" value="Chromosome 1"/>
</dbReference>
<dbReference type="GO" id="GO:0030677">
    <property type="term" value="C:ribonuclease P complex"/>
    <property type="evidence" value="ECO:0007669"/>
    <property type="project" value="TreeGrafter"/>
</dbReference>
<dbReference type="GO" id="GO:0042781">
    <property type="term" value="F:3'-tRNA processing endoribonuclease activity"/>
    <property type="evidence" value="ECO:0007669"/>
    <property type="project" value="TreeGrafter"/>
</dbReference>
<dbReference type="GO" id="GO:0004526">
    <property type="term" value="F:ribonuclease P activity"/>
    <property type="evidence" value="ECO:0007669"/>
    <property type="project" value="UniProtKB-UniRule"/>
</dbReference>
<dbReference type="GO" id="GO:0000049">
    <property type="term" value="F:tRNA binding"/>
    <property type="evidence" value="ECO:0007669"/>
    <property type="project" value="UniProtKB-UniRule"/>
</dbReference>
<dbReference type="GO" id="GO:0001682">
    <property type="term" value="P:tRNA 5'-leader removal"/>
    <property type="evidence" value="ECO:0007669"/>
    <property type="project" value="UniProtKB-UniRule"/>
</dbReference>
<dbReference type="Gene3D" id="3.30.230.10">
    <property type="match status" value="1"/>
</dbReference>
<dbReference type="HAMAP" id="MF_00227">
    <property type="entry name" value="RNase_P"/>
    <property type="match status" value="1"/>
</dbReference>
<dbReference type="InterPro" id="IPR020568">
    <property type="entry name" value="Ribosomal_Su5_D2-typ_SF"/>
</dbReference>
<dbReference type="InterPro" id="IPR014721">
    <property type="entry name" value="Ribsml_uS5_D2-typ_fold_subgr"/>
</dbReference>
<dbReference type="InterPro" id="IPR000100">
    <property type="entry name" value="RNase_P"/>
</dbReference>
<dbReference type="InterPro" id="IPR020539">
    <property type="entry name" value="RNase_P_CS"/>
</dbReference>
<dbReference type="NCBIfam" id="TIGR00188">
    <property type="entry name" value="rnpA"/>
    <property type="match status" value="1"/>
</dbReference>
<dbReference type="PANTHER" id="PTHR33992">
    <property type="entry name" value="RIBONUCLEASE P PROTEIN COMPONENT"/>
    <property type="match status" value="1"/>
</dbReference>
<dbReference type="PANTHER" id="PTHR33992:SF1">
    <property type="entry name" value="RIBONUCLEASE P PROTEIN COMPONENT"/>
    <property type="match status" value="1"/>
</dbReference>
<dbReference type="Pfam" id="PF00825">
    <property type="entry name" value="Ribonuclease_P"/>
    <property type="match status" value="1"/>
</dbReference>
<dbReference type="SUPFAM" id="SSF54211">
    <property type="entry name" value="Ribosomal protein S5 domain 2-like"/>
    <property type="match status" value="1"/>
</dbReference>
<dbReference type="PROSITE" id="PS00648">
    <property type="entry name" value="RIBONUCLEASE_P"/>
    <property type="match status" value="1"/>
</dbReference>
<keyword id="KW-0255">Endonuclease</keyword>
<keyword id="KW-0378">Hydrolase</keyword>
<keyword id="KW-0540">Nuclease</keyword>
<keyword id="KW-0694">RNA-binding</keyword>
<keyword id="KW-0819">tRNA processing</keyword>
<accession>B6EP41</accession>
<feature type="chain" id="PRO_1000100346" description="Ribonuclease P protein component">
    <location>
        <begin position="1"/>
        <end position="117"/>
    </location>
</feature>
<sequence>MNYDFSRELRLLTPEDYKSVFKQAHRAGSPHFTILARENSLSHPRLGLAVPKKQIKTAVGRNKFKRITRESFRNKQHSLPAKDFVVIAKKSAQELSNEDFNKLLDKLWHRLSRPSRG</sequence>
<proteinExistence type="inferred from homology"/>
<organism>
    <name type="scientific">Aliivibrio salmonicida (strain LFI1238)</name>
    <name type="common">Vibrio salmonicida (strain LFI1238)</name>
    <dbReference type="NCBI Taxonomy" id="316275"/>
    <lineage>
        <taxon>Bacteria</taxon>
        <taxon>Pseudomonadati</taxon>
        <taxon>Pseudomonadota</taxon>
        <taxon>Gammaproteobacteria</taxon>
        <taxon>Vibrionales</taxon>
        <taxon>Vibrionaceae</taxon>
        <taxon>Aliivibrio</taxon>
    </lineage>
</organism>
<gene>
    <name evidence="1" type="primary">rnpA</name>
    <name type="ordered locus">VSAL_I0004</name>
</gene>
<name>RNPA_ALISL</name>